<protein>
    <recommendedName>
        <fullName>Probable xyloglucan endotransglucosylase/hydrolase protein 28</fullName>
        <shortName>At-XTH28</shortName>
        <shortName>XTH-28</shortName>
        <ecNumber>2.4.1.207</ecNumber>
    </recommendedName>
</protein>
<keyword id="KW-0052">Apoplast</keyword>
<keyword id="KW-0134">Cell wall</keyword>
<keyword id="KW-0961">Cell wall biogenesis/degradation</keyword>
<keyword id="KW-1015">Disulfide bond</keyword>
<keyword id="KW-0325">Glycoprotein</keyword>
<keyword id="KW-0326">Glycosidase</keyword>
<keyword id="KW-0378">Hydrolase</keyword>
<keyword id="KW-1185">Reference proteome</keyword>
<keyword id="KW-0964">Secreted</keyword>
<keyword id="KW-0732">Signal</keyword>
<keyword id="KW-0808">Transferase</keyword>
<organism>
    <name type="scientific">Arabidopsis thaliana</name>
    <name type="common">Mouse-ear cress</name>
    <dbReference type="NCBI Taxonomy" id="3702"/>
    <lineage>
        <taxon>Eukaryota</taxon>
        <taxon>Viridiplantae</taxon>
        <taxon>Streptophyta</taxon>
        <taxon>Embryophyta</taxon>
        <taxon>Tracheophyta</taxon>
        <taxon>Spermatophyta</taxon>
        <taxon>Magnoliopsida</taxon>
        <taxon>eudicotyledons</taxon>
        <taxon>Gunneridae</taxon>
        <taxon>Pentapetalae</taxon>
        <taxon>rosids</taxon>
        <taxon>malvids</taxon>
        <taxon>Brassicales</taxon>
        <taxon>Brassicaceae</taxon>
        <taxon>Camelineae</taxon>
        <taxon>Arabidopsis</taxon>
    </lineage>
</organism>
<reference key="1">
    <citation type="journal article" date="1996" name="Plant J.">
        <title>The Arabidopsis XET-related gene family: environmental and hormonal regulation of expression.</title>
        <authorList>
            <person name="Xu W."/>
            <person name="Campbell P."/>
            <person name="Vargheese A.K."/>
            <person name="Braam J."/>
        </authorList>
    </citation>
    <scope>NUCLEOTIDE SEQUENCE [MRNA]</scope>
    <source>
        <strain>cv. Columbia</strain>
    </source>
</reference>
<reference key="2">
    <citation type="journal article" date="1999" name="Plant Physiol.">
        <title>Expression of endoxyloglucan transferase genes in acaulis mutants of Arabidopsis.</title>
        <authorList>
            <person name="Akamatsu T."/>
            <person name="Hanzawa Y."/>
            <person name="Ohtake Y."/>
            <person name="Takahashi T."/>
            <person name="Nishitani K."/>
            <person name="Komeda Y."/>
        </authorList>
    </citation>
    <scope>NUCLEOTIDE SEQUENCE [GENOMIC DNA]</scope>
    <scope>TISSUE SPECIFICITY</scope>
    <source>
        <strain>cv. Columbia</strain>
    </source>
</reference>
<reference key="3">
    <citation type="submission" date="1997-05" db="EMBL/GenBank/DDBJ databases">
        <authorList>
            <person name="Okamoto S."/>
            <person name="Kamimai T."/>
            <person name="Nishitani K."/>
        </authorList>
    </citation>
    <scope>NUCLEOTIDE SEQUENCE [MRNA]</scope>
    <source>
        <strain>cv. Columbia</strain>
    </source>
</reference>
<reference key="4">
    <citation type="journal article" date="2000" name="Nature">
        <title>Sequence and analysis of chromosome 1 of the plant Arabidopsis thaliana.</title>
        <authorList>
            <person name="Theologis A."/>
            <person name="Ecker J.R."/>
            <person name="Palm C.J."/>
            <person name="Federspiel N.A."/>
            <person name="Kaul S."/>
            <person name="White O."/>
            <person name="Alonso J."/>
            <person name="Altafi H."/>
            <person name="Araujo R."/>
            <person name="Bowman C.L."/>
            <person name="Brooks S.Y."/>
            <person name="Buehler E."/>
            <person name="Chan A."/>
            <person name="Chao Q."/>
            <person name="Chen H."/>
            <person name="Cheuk R.F."/>
            <person name="Chin C.W."/>
            <person name="Chung M.K."/>
            <person name="Conn L."/>
            <person name="Conway A.B."/>
            <person name="Conway A.R."/>
            <person name="Creasy T.H."/>
            <person name="Dewar K."/>
            <person name="Dunn P."/>
            <person name="Etgu P."/>
            <person name="Feldblyum T.V."/>
            <person name="Feng J.-D."/>
            <person name="Fong B."/>
            <person name="Fujii C.Y."/>
            <person name="Gill J.E."/>
            <person name="Goldsmith A.D."/>
            <person name="Haas B."/>
            <person name="Hansen N.F."/>
            <person name="Hughes B."/>
            <person name="Huizar L."/>
            <person name="Hunter J.L."/>
            <person name="Jenkins J."/>
            <person name="Johnson-Hopson C."/>
            <person name="Khan S."/>
            <person name="Khaykin E."/>
            <person name="Kim C.J."/>
            <person name="Koo H.L."/>
            <person name="Kremenetskaia I."/>
            <person name="Kurtz D.B."/>
            <person name="Kwan A."/>
            <person name="Lam B."/>
            <person name="Langin-Hooper S."/>
            <person name="Lee A."/>
            <person name="Lee J.M."/>
            <person name="Lenz C.A."/>
            <person name="Li J.H."/>
            <person name="Li Y.-P."/>
            <person name="Lin X."/>
            <person name="Liu S.X."/>
            <person name="Liu Z.A."/>
            <person name="Luros J.S."/>
            <person name="Maiti R."/>
            <person name="Marziali A."/>
            <person name="Militscher J."/>
            <person name="Miranda M."/>
            <person name="Nguyen M."/>
            <person name="Nierman W.C."/>
            <person name="Osborne B.I."/>
            <person name="Pai G."/>
            <person name="Peterson J."/>
            <person name="Pham P.K."/>
            <person name="Rizzo M."/>
            <person name="Rooney T."/>
            <person name="Rowley D."/>
            <person name="Sakano H."/>
            <person name="Salzberg S.L."/>
            <person name="Schwartz J.R."/>
            <person name="Shinn P."/>
            <person name="Southwick A.M."/>
            <person name="Sun H."/>
            <person name="Tallon L.J."/>
            <person name="Tambunga G."/>
            <person name="Toriumi M.J."/>
            <person name="Town C.D."/>
            <person name="Utterback T."/>
            <person name="Van Aken S."/>
            <person name="Vaysberg M."/>
            <person name="Vysotskaia V.S."/>
            <person name="Walker M."/>
            <person name="Wu D."/>
            <person name="Yu G."/>
            <person name="Fraser C.M."/>
            <person name="Venter J.C."/>
            <person name="Davis R.W."/>
        </authorList>
    </citation>
    <scope>NUCLEOTIDE SEQUENCE [LARGE SCALE GENOMIC DNA]</scope>
    <source>
        <strain>cv. Columbia</strain>
    </source>
</reference>
<reference key="5">
    <citation type="journal article" date="2017" name="Plant J.">
        <title>Araport11: a complete reannotation of the Arabidopsis thaliana reference genome.</title>
        <authorList>
            <person name="Cheng C.Y."/>
            <person name="Krishnakumar V."/>
            <person name="Chan A.P."/>
            <person name="Thibaud-Nissen F."/>
            <person name="Schobel S."/>
            <person name="Town C.D."/>
        </authorList>
    </citation>
    <scope>GENOME REANNOTATION</scope>
    <source>
        <strain>cv. Columbia</strain>
    </source>
</reference>
<reference key="6">
    <citation type="journal article" date="2003" name="Science">
        <title>Empirical analysis of transcriptional activity in the Arabidopsis genome.</title>
        <authorList>
            <person name="Yamada K."/>
            <person name="Lim J."/>
            <person name="Dale J.M."/>
            <person name="Chen H."/>
            <person name="Shinn P."/>
            <person name="Palm C.J."/>
            <person name="Southwick A.M."/>
            <person name="Wu H.C."/>
            <person name="Kim C.J."/>
            <person name="Nguyen M."/>
            <person name="Pham P.K."/>
            <person name="Cheuk R.F."/>
            <person name="Karlin-Newmann G."/>
            <person name="Liu S.X."/>
            <person name="Lam B."/>
            <person name="Sakano H."/>
            <person name="Wu T."/>
            <person name="Yu G."/>
            <person name="Miranda M."/>
            <person name="Quach H.L."/>
            <person name="Tripp M."/>
            <person name="Chang C.H."/>
            <person name="Lee J.M."/>
            <person name="Toriumi M.J."/>
            <person name="Chan M.M."/>
            <person name="Tang C.C."/>
            <person name="Onodera C.S."/>
            <person name="Deng J.M."/>
            <person name="Akiyama K."/>
            <person name="Ansari Y."/>
            <person name="Arakawa T."/>
            <person name="Banh J."/>
            <person name="Banno F."/>
            <person name="Bowser L."/>
            <person name="Brooks S.Y."/>
            <person name="Carninci P."/>
            <person name="Chao Q."/>
            <person name="Choy N."/>
            <person name="Enju A."/>
            <person name="Goldsmith A.D."/>
            <person name="Gurjal M."/>
            <person name="Hansen N.F."/>
            <person name="Hayashizaki Y."/>
            <person name="Johnson-Hopson C."/>
            <person name="Hsuan V.W."/>
            <person name="Iida K."/>
            <person name="Karnes M."/>
            <person name="Khan S."/>
            <person name="Koesema E."/>
            <person name="Ishida J."/>
            <person name="Jiang P.X."/>
            <person name="Jones T."/>
            <person name="Kawai J."/>
            <person name="Kamiya A."/>
            <person name="Meyers C."/>
            <person name="Nakajima M."/>
            <person name="Narusaka M."/>
            <person name="Seki M."/>
            <person name="Sakurai T."/>
            <person name="Satou M."/>
            <person name="Tamse R."/>
            <person name="Vaysberg M."/>
            <person name="Wallender E.K."/>
            <person name="Wong C."/>
            <person name="Yamamura Y."/>
            <person name="Yuan S."/>
            <person name="Shinozaki K."/>
            <person name="Davis R.W."/>
            <person name="Theologis A."/>
            <person name="Ecker J.R."/>
        </authorList>
    </citation>
    <scope>NUCLEOTIDE SEQUENCE [LARGE SCALE MRNA]</scope>
    <source>
        <strain>cv. Columbia</strain>
    </source>
</reference>
<reference key="7">
    <citation type="submission" date="2002-03" db="EMBL/GenBank/DDBJ databases">
        <title>Full-length cDNA from Arabidopsis thaliana.</title>
        <authorList>
            <person name="Brover V.V."/>
            <person name="Troukhan M.E."/>
            <person name="Alexandrov N.A."/>
            <person name="Lu Y.-P."/>
            <person name="Flavell R.B."/>
            <person name="Feldmann K.A."/>
        </authorList>
    </citation>
    <scope>NUCLEOTIDE SEQUENCE [LARGE SCALE MRNA]</scope>
</reference>
<reference key="8">
    <citation type="journal article" date="2002" name="Plant Cell Physiol.">
        <title>The XTH family of enzymes involved in xyloglucan endotransglucosylation and endohydrolysis: current perspectives and a new unifying nomenclature.</title>
        <authorList>
            <person name="Rose J.K.C."/>
            <person name="Braam J."/>
            <person name="Fry S.C."/>
            <person name="Nishitani K."/>
        </authorList>
    </citation>
    <scope>NOMENCLATURE</scope>
</reference>
<evidence type="ECO:0000250" key="1"/>
<evidence type="ECO:0000250" key="2">
    <source>
        <dbReference type="UniProtKB" id="Q8GZD5"/>
    </source>
</evidence>
<evidence type="ECO:0000255" key="3"/>
<evidence type="ECO:0000255" key="4">
    <source>
        <dbReference type="PROSITE-ProRule" id="PRU01098"/>
    </source>
</evidence>
<evidence type="ECO:0000256" key="5">
    <source>
        <dbReference type="SAM" id="MobiDB-lite"/>
    </source>
</evidence>
<evidence type="ECO:0000269" key="6">
    <source>
    </source>
</evidence>
<evidence type="ECO:0000305" key="7"/>
<proteinExistence type="evidence at transcript level"/>
<comment type="function">
    <text evidence="1">Catalyzes xyloglucan endohydrolysis (XEH) and/or endotransglycosylation (XET). Cleaves and religates xyloglucan polymers, an essential constituent of the primary cell wall, and thereby participates in cell wall construction of growing tissues (By similarity).</text>
</comment>
<comment type="catalytic activity">
    <reaction>
        <text>breaks a beta-(1-&gt;4) bond in the backbone of a xyloglucan and transfers the xyloglucanyl segment on to O-4 of the non-reducing terminal glucose residue of an acceptor, which can be a xyloglucan or an oligosaccharide of xyloglucan.</text>
        <dbReference type="EC" id="2.4.1.207"/>
    </reaction>
</comment>
<comment type="subcellular location">
    <subcellularLocation>
        <location evidence="7">Secreted</location>
        <location evidence="7">Cell wall</location>
    </subcellularLocation>
    <subcellularLocation>
        <location evidence="7">Secreted</location>
        <location evidence="7">Extracellular space</location>
        <location evidence="7">Apoplast</location>
    </subcellularLocation>
</comment>
<comment type="tissue specificity">
    <text evidence="6">Expressed in 7 day old seedlings, roots, rosette leaves, internodes between nodes bearing axillary shoots, nodes bearing flowers, flower buds and siliques.</text>
</comment>
<comment type="PTM">
    <text evidence="1">Contains at least one intrachain disulfide bond essential for its enzymatic activity.</text>
</comment>
<comment type="miscellaneous">
    <text>In contrast to group 1 and group 2 endotransglucosylase/hydrolase proteins, it may not contain the ligase activity, and may catalyze endohydrolysis xyloglucan polymers only.</text>
</comment>
<comment type="similarity">
    <text evidence="7">Belongs to the glycosyl hydrolase 16 family. XTH group 3 subfamily.</text>
</comment>
<accession>Q38909</accession>
<accession>O04750</accession>
<name>XTH28_ARATH</name>
<dbReference type="EC" id="2.4.1.207"/>
<dbReference type="EMBL" id="U43487">
    <property type="protein sequence ID" value="AAB18366.1"/>
    <property type="molecule type" value="mRNA"/>
</dbReference>
<dbReference type="EMBL" id="AF163820">
    <property type="protein sequence ID" value="AAD45124.1"/>
    <property type="molecule type" value="Genomic_DNA"/>
</dbReference>
<dbReference type="EMBL" id="D63510">
    <property type="protein sequence ID" value="BAA20290.1"/>
    <property type="molecule type" value="mRNA"/>
</dbReference>
<dbReference type="EMBL" id="AC006917">
    <property type="protein sequence ID" value="AAF79246.1"/>
    <property type="molecule type" value="Genomic_DNA"/>
</dbReference>
<dbReference type="EMBL" id="CP002684">
    <property type="protein sequence ID" value="AEE29214.1"/>
    <property type="molecule type" value="Genomic_DNA"/>
</dbReference>
<dbReference type="EMBL" id="AF385714">
    <property type="protein sequence ID" value="AAK60305.1"/>
    <property type="molecule type" value="mRNA"/>
</dbReference>
<dbReference type="EMBL" id="AY085855">
    <property type="protein sequence ID" value="AAM63068.1"/>
    <property type="molecule type" value="mRNA"/>
</dbReference>
<dbReference type="PIR" id="S71224">
    <property type="entry name" value="S71224"/>
</dbReference>
<dbReference type="RefSeq" id="NP_172925.1">
    <property type="nucleotide sequence ID" value="NM_101341.4"/>
</dbReference>
<dbReference type="SMR" id="Q38909"/>
<dbReference type="BioGRID" id="23277">
    <property type="interactions" value="1"/>
</dbReference>
<dbReference type="FunCoup" id="Q38909">
    <property type="interactions" value="36"/>
</dbReference>
<dbReference type="STRING" id="3702.Q38909"/>
<dbReference type="CAZy" id="GH16">
    <property type="family name" value="Glycoside Hydrolase Family 16"/>
</dbReference>
<dbReference type="GlyCosmos" id="Q38909">
    <property type="glycosylation" value="1 site, No reported glycans"/>
</dbReference>
<dbReference type="GlyGen" id="Q38909">
    <property type="glycosylation" value="1 site"/>
</dbReference>
<dbReference type="PaxDb" id="3702-AT1G14720.1"/>
<dbReference type="ProteomicsDB" id="243173"/>
<dbReference type="EnsemblPlants" id="AT1G14720.1">
    <property type="protein sequence ID" value="AT1G14720.1"/>
    <property type="gene ID" value="AT1G14720"/>
</dbReference>
<dbReference type="GeneID" id="838037"/>
<dbReference type="Gramene" id="AT1G14720.1">
    <property type="protein sequence ID" value="AT1G14720.1"/>
    <property type="gene ID" value="AT1G14720"/>
</dbReference>
<dbReference type="KEGG" id="ath:AT1G14720"/>
<dbReference type="Araport" id="AT1G14720"/>
<dbReference type="TAIR" id="AT1G14720">
    <property type="gene designation" value="XTH28"/>
</dbReference>
<dbReference type="eggNOG" id="ENOG502QVQI">
    <property type="taxonomic scope" value="Eukaryota"/>
</dbReference>
<dbReference type="HOGENOM" id="CLU_048041_1_2_1"/>
<dbReference type="InParanoid" id="Q38909"/>
<dbReference type="OMA" id="HMRASRS"/>
<dbReference type="PhylomeDB" id="Q38909"/>
<dbReference type="BioCyc" id="ARA:AT1G14720-MONOMER"/>
<dbReference type="BRENDA" id="2.4.1.207">
    <property type="organism ID" value="399"/>
</dbReference>
<dbReference type="PRO" id="PR:Q38909"/>
<dbReference type="Proteomes" id="UP000006548">
    <property type="component" value="Chromosome 1"/>
</dbReference>
<dbReference type="ExpressionAtlas" id="Q38909">
    <property type="expression patterns" value="baseline and differential"/>
</dbReference>
<dbReference type="GO" id="GO:0048046">
    <property type="term" value="C:apoplast"/>
    <property type="evidence" value="ECO:0007669"/>
    <property type="project" value="UniProtKB-SubCell"/>
</dbReference>
<dbReference type="GO" id="GO:0004553">
    <property type="term" value="F:hydrolase activity, hydrolyzing O-glycosyl compounds"/>
    <property type="evidence" value="ECO:0007669"/>
    <property type="project" value="InterPro"/>
</dbReference>
<dbReference type="GO" id="GO:0030247">
    <property type="term" value="F:polysaccharide binding"/>
    <property type="evidence" value="ECO:0000250"/>
    <property type="project" value="UniProtKB"/>
</dbReference>
<dbReference type="GO" id="GO:0016762">
    <property type="term" value="F:xyloglucan:xyloglucosyl transferase activity"/>
    <property type="evidence" value="ECO:0007669"/>
    <property type="project" value="UniProtKB-EC"/>
</dbReference>
<dbReference type="GO" id="GO:0042546">
    <property type="term" value="P:cell wall biogenesis"/>
    <property type="evidence" value="ECO:0007669"/>
    <property type="project" value="InterPro"/>
</dbReference>
<dbReference type="GO" id="GO:0071555">
    <property type="term" value="P:cell wall organization"/>
    <property type="evidence" value="ECO:0007669"/>
    <property type="project" value="UniProtKB-KW"/>
</dbReference>
<dbReference type="GO" id="GO:0010154">
    <property type="term" value="P:fruit development"/>
    <property type="evidence" value="ECO:0000315"/>
    <property type="project" value="TAIR"/>
</dbReference>
<dbReference type="GO" id="GO:0080086">
    <property type="term" value="P:stamen filament development"/>
    <property type="evidence" value="ECO:0000315"/>
    <property type="project" value="TAIR"/>
</dbReference>
<dbReference type="GO" id="GO:0010411">
    <property type="term" value="P:xyloglucan metabolic process"/>
    <property type="evidence" value="ECO:0007669"/>
    <property type="project" value="InterPro"/>
</dbReference>
<dbReference type="CDD" id="cd02176">
    <property type="entry name" value="GH16_XET"/>
    <property type="match status" value="1"/>
</dbReference>
<dbReference type="FunFam" id="2.60.120.200:FF:000025">
    <property type="entry name" value="Xyloglucan endotransglucosylase/hydrolase"/>
    <property type="match status" value="1"/>
</dbReference>
<dbReference type="Gene3D" id="2.60.120.200">
    <property type="match status" value="1"/>
</dbReference>
<dbReference type="InterPro" id="IPR044791">
    <property type="entry name" value="Beta-glucanase/XTH"/>
</dbReference>
<dbReference type="InterPro" id="IPR013320">
    <property type="entry name" value="ConA-like_dom_sf"/>
</dbReference>
<dbReference type="InterPro" id="IPR000757">
    <property type="entry name" value="GH16"/>
</dbReference>
<dbReference type="InterPro" id="IPR010713">
    <property type="entry name" value="XET_C"/>
</dbReference>
<dbReference type="InterPro" id="IPR016455">
    <property type="entry name" value="XTH"/>
</dbReference>
<dbReference type="PANTHER" id="PTHR31062">
    <property type="entry name" value="XYLOGLUCAN ENDOTRANSGLUCOSYLASE/HYDROLASE PROTEIN 8-RELATED"/>
    <property type="match status" value="1"/>
</dbReference>
<dbReference type="Pfam" id="PF00722">
    <property type="entry name" value="Glyco_hydro_16"/>
    <property type="match status" value="1"/>
</dbReference>
<dbReference type="Pfam" id="PF06955">
    <property type="entry name" value="XET_C"/>
    <property type="match status" value="1"/>
</dbReference>
<dbReference type="PIRSF" id="PIRSF005604">
    <property type="entry name" value="XET"/>
    <property type="match status" value="1"/>
</dbReference>
<dbReference type="SUPFAM" id="SSF49899">
    <property type="entry name" value="Concanavalin A-like lectins/glucanases"/>
    <property type="match status" value="1"/>
</dbReference>
<dbReference type="PROSITE" id="PS51762">
    <property type="entry name" value="GH16_2"/>
    <property type="match status" value="1"/>
</dbReference>
<sequence>MGFITRFLVFMSLFTSLVSGFALQKLPLIQFDEGYTQLFGDQNLIVHRDGKSVRLTLDERTGSGFVSNDIYLHGFFSSSIKLPADYSAGVVIAFYLSNGDLYEKNHDEIDFEFLGNIRGREWRIQTNIYGNGSTHLGREERYNLWFDPTEDFHQYSILWSLSHIIFYVDNVPIREVKRTASMGGDFPAKPMSLYSTIWDGSKWATDGGKYGVNYKYAPYVSQFTDLILHGCAVDPTEKFPSCKDEAVQNLRLASEITESQRNKMEIFRQKHMTYSYCYDHMRYKVVLSECVVNPAEAKRLRVYDPVTFGGIPHGHRRGKHRSRSRLARTESI</sequence>
<feature type="signal peptide" evidence="3">
    <location>
        <begin position="1"/>
        <end position="22"/>
    </location>
</feature>
<feature type="chain" id="PRO_0000011828" description="Probable xyloglucan endotransglucosylase/hydrolase protein 28">
    <location>
        <begin position="23"/>
        <end position="332"/>
    </location>
</feature>
<feature type="domain" description="GH16" evidence="4">
    <location>
        <begin position="23"/>
        <end position="223"/>
    </location>
</feature>
<feature type="region of interest" description="Disordered" evidence="5">
    <location>
        <begin position="313"/>
        <end position="332"/>
    </location>
</feature>
<feature type="compositionally biased region" description="Basic residues" evidence="5">
    <location>
        <begin position="313"/>
        <end position="326"/>
    </location>
</feature>
<feature type="active site" description="Nucleophile" evidence="2">
    <location>
        <position position="108"/>
    </location>
</feature>
<feature type="active site" description="Proton donor" evidence="2">
    <location>
        <position position="112"/>
    </location>
</feature>
<feature type="binding site" evidence="2">
    <location>
        <position position="112"/>
    </location>
    <ligand>
        <name>xyloglucan</name>
        <dbReference type="ChEBI" id="CHEBI:18233"/>
    </ligand>
</feature>
<feature type="binding site" evidence="2">
    <location>
        <begin position="125"/>
        <end position="127"/>
    </location>
    <ligand>
        <name>xyloglucan</name>
        <dbReference type="ChEBI" id="CHEBI:18233"/>
    </ligand>
</feature>
<feature type="binding site" evidence="2">
    <location>
        <begin position="135"/>
        <end position="139"/>
    </location>
    <ligand>
        <name>xyloglucan</name>
        <dbReference type="ChEBI" id="CHEBI:18233"/>
    </ligand>
</feature>
<feature type="binding site" evidence="2">
    <location>
        <begin position="202"/>
        <end position="203"/>
    </location>
    <ligand>
        <name>xyloglucan</name>
        <dbReference type="ChEBI" id="CHEBI:18233"/>
    </ligand>
</feature>
<feature type="binding site" evidence="2">
    <location>
        <position position="207"/>
    </location>
    <ligand>
        <name>xyloglucan</name>
        <dbReference type="ChEBI" id="CHEBI:18233"/>
    </ligand>
</feature>
<feature type="binding site" evidence="2">
    <location>
        <position position="282"/>
    </location>
    <ligand>
        <name>xyloglucan</name>
        <dbReference type="ChEBI" id="CHEBI:18233"/>
    </ligand>
</feature>
<feature type="site" description="Important for catalytic activity" evidence="2">
    <location>
        <position position="110"/>
    </location>
</feature>
<feature type="glycosylation site" description="N-linked (GlcNAc...) asparagine" evidence="3">
    <location>
        <position position="131"/>
    </location>
</feature>
<feature type="disulfide bond" evidence="2">
    <location>
        <begin position="277"/>
        <end position="290"/>
    </location>
</feature>
<gene>
    <name type="primary">XTH28</name>
    <name type="synonym">EXGT-A2</name>
    <name type="synonym">XTR2</name>
    <name type="ordered locus">At1g14720</name>
    <name type="ORF">F10B6.12</name>
    <name type="ORF">F10B6.29</name>
</gene>